<sequence length="273" mass="31005">MSMFTSTRTLTQTMDKPDDLTRSATETAVKLSNMNQRVSRFHDKMENEIEVRRVDDDTRVKMIKDAIAHLDRLIQTESRKRQASFEDIREEVKKSADNMYLTIKEEIDTMAANFRKSLAEMGDTLNNVETNLQNQIAIHNDAIAALRKEALKSLNDLETGIATENAERKKMYDQLNEKVAEGFARISAAIEKETIARERAVSAATTEALTNTKLVEKCVNEQLENVASEIRAIQEEIDREKAERKEAEDKIVNTLEDVVSKIQGGLSMVTKHQ</sequence>
<dbReference type="EMBL" id="X85958">
    <property type="protein sequence ID" value="CAA59935.1"/>
    <property type="molecule type" value="Genomic_DNA"/>
</dbReference>
<dbReference type="EMBL" id="X14185">
    <property type="protein sequence ID" value="CAA32388.1"/>
    <property type="status" value="ALT_INIT"/>
    <property type="molecule type" value="mRNA"/>
</dbReference>
<dbReference type="EMBL" id="M36728">
    <property type="protein sequence ID" value="AAA29154.1"/>
    <property type="status" value="ALT_INIT"/>
    <property type="molecule type" value="mRNA"/>
</dbReference>
<dbReference type="SMR" id="P15518"/>
<dbReference type="KEGG" id="gla:GL50803_004812"/>
<dbReference type="VEuPathDB" id="GiardiaDB:DHA2_151428"/>
<dbReference type="VEuPathDB" id="GiardiaDB:GL50581_2741"/>
<dbReference type="VEuPathDB" id="GiardiaDB:GL50803_004812"/>
<dbReference type="VEuPathDB" id="GiardiaDB:QR46_3382"/>
<dbReference type="GO" id="GO:0005737">
    <property type="term" value="C:cytoplasm"/>
    <property type="evidence" value="ECO:0007669"/>
    <property type="project" value="UniProtKB-KW"/>
</dbReference>
<dbReference type="GO" id="GO:0005874">
    <property type="term" value="C:microtubule"/>
    <property type="evidence" value="ECO:0007669"/>
    <property type="project" value="UniProtKB-KW"/>
</dbReference>
<dbReference type="GO" id="GO:0005200">
    <property type="term" value="F:structural constituent of cytoskeleton"/>
    <property type="evidence" value="ECO:0007669"/>
    <property type="project" value="InterPro"/>
</dbReference>
<dbReference type="InterPro" id="IPR038835">
    <property type="entry name" value="Giardin_beta-like"/>
</dbReference>
<dbReference type="InterPro" id="IPR008374">
    <property type="entry name" value="SF_assemblin/giardin_b"/>
</dbReference>
<dbReference type="PANTHER" id="PTHR37027:SF2">
    <property type="entry name" value="CHROMOSOME UNDETERMINED SCAFFOLD_148, WHOLE GENOME SHOTGUN SEQUENCE"/>
    <property type="match status" value="1"/>
</dbReference>
<dbReference type="PANTHER" id="PTHR37027">
    <property type="entry name" value="KDE4"/>
    <property type="match status" value="1"/>
</dbReference>
<dbReference type="Pfam" id="PF06705">
    <property type="entry name" value="SF-assemblin"/>
    <property type="match status" value="1"/>
</dbReference>
<dbReference type="PRINTS" id="PR01799">
    <property type="entry name" value="SFASSEMBLIN"/>
</dbReference>
<proteinExistence type="evidence at protein level"/>
<comment type="function">
    <text>Giardins are involved in parasite attachment to the intestinal mucosa and in the cytoskeletal disassembly and reassembly that marks the transition from infectious trophozoite to transmissible cyst. They may interact with other cytoskeletal proteins such as microtubules in the microribbons or crossbridges, to maintain the integrity of the ventral disk.</text>
</comment>
<comment type="subunit">
    <text evidence="2">Interacts with BOP1 (via C-terminal WD repeats).</text>
</comment>
<comment type="subcellular location">
    <subcellularLocation>
        <location>Cytoplasm</location>
        <location>Cytoskeleton</location>
    </subcellularLocation>
    <text>Microribbons of ventral disc.</text>
</comment>
<comment type="domain">
    <text>Shows an alpha-helical coiled coil structure (35 repeating heptads) related to the alpha-type fibrous proteins (K-M-E-F class).</text>
</comment>
<comment type="similarity">
    <text evidence="4">Belongs to the SF-assemblin family.</text>
</comment>
<comment type="sequence caution" evidence="4">
    <conflict type="erroneous initiation">
        <sequence resource="EMBL-CDS" id="AAA29154"/>
    </conflict>
</comment>
<comment type="sequence caution" evidence="4">
    <conflict type="erroneous initiation">
        <sequence resource="EMBL-CDS" id="CAA32388"/>
    </conflict>
</comment>
<accession>P15518</accession>
<name>GIAB_GIAIN</name>
<keyword id="KW-0175">Coiled coil</keyword>
<keyword id="KW-0963">Cytoplasm</keyword>
<keyword id="KW-0206">Cytoskeleton</keyword>
<keyword id="KW-0493">Microtubule</keyword>
<protein>
    <recommendedName>
        <fullName>Giardin subunit beta</fullName>
    </recommendedName>
    <alternativeName>
        <fullName evidence="3">Beta-giardin</fullName>
    </alternativeName>
    <alternativeName>
        <fullName>Protein 14B, cytoskeletal</fullName>
    </alternativeName>
</protein>
<evidence type="ECO:0000255" key="1"/>
<evidence type="ECO:0000269" key="2">
    <source>
    </source>
</evidence>
<evidence type="ECO:0000303" key="3">
    <source>
    </source>
</evidence>
<evidence type="ECO:0000305" key="4"/>
<reference key="1">
    <citation type="journal article" date="1995" name="Nucleic Acids Res.">
        <title>Analysis of consensus sequence patterns in Giardia cytoskeleton gene promoters.</title>
        <authorList>
            <person name="Holberton D.V."/>
            <person name="Marshall J."/>
        </authorList>
    </citation>
    <scope>NUCLEOTIDE SEQUENCE [GENOMIC DNA]</scope>
    <scope>SEQUENCE REVISION TO N-TERMINUS</scope>
    <source>
        <strain>Portland-1</strain>
    </source>
</reference>
<reference key="2">
    <citation type="journal article" date="1988" name="Nucleic Acids Res.">
        <title>Sequence of a giardin subunit cDNA from Giardia lamblia.</title>
        <authorList>
            <person name="Baker D.A."/>
            <person name="Holberton D.V."/>
            <person name="Marshall J."/>
        </authorList>
    </citation>
    <scope>NUCLEOTIDE SEQUENCE</scope>
    <source>
        <strain>Portland-1</strain>
    </source>
</reference>
<reference key="3">
    <citation type="journal article" date="1988" name="J. Mol. Biol.">
        <title>Segmented alpha-helical coiled-coil structure of the protein giardin from the Giardia cytoskeleton.</title>
        <authorList>
            <person name="Holberton D.V."/>
            <person name="Baker D.A."/>
            <person name="Marshall J."/>
        </authorList>
    </citation>
    <scope>NUCLEOTIDE SEQUENCE</scope>
</reference>
<reference key="4">
    <citation type="journal article" date="2006" name="Parasitol. Res.">
        <title>Interaction of beta-giardin with the Bop1 protein in Giardia lamblia.</title>
        <authorList>
            <person name="Kim J."/>
            <person name="Goo S.Y."/>
            <person name="Chung H.J."/>
            <person name="Yang H.W."/>
            <person name="Yong T.S."/>
            <person name="Lee K.H."/>
            <person name="Park S.J."/>
        </authorList>
    </citation>
    <scope>INTERACTION WITH BOP1</scope>
    <source>
        <strain evidence="3">ATCC 30957 / WB</strain>
    </source>
</reference>
<feature type="chain" id="PRO_0000221444" description="Giardin subunit beta">
    <location>
        <begin position="1"/>
        <end position="273"/>
    </location>
</feature>
<feature type="region of interest" description="Nonhelical region">
    <location>
        <begin position="1"/>
        <end position="19"/>
    </location>
</feature>
<feature type="region of interest" description="Rod">
    <location>
        <begin position="20"/>
        <end position="273"/>
    </location>
</feature>
<feature type="coiled-coil region" evidence="1">
    <location>
        <begin position="123"/>
        <end position="175"/>
    </location>
</feature>
<feature type="coiled-coil region" evidence="1">
    <location>
        <begin position="211"/>
        <end position="263"/>
    </location>
</feature>
<organism>
    <name type="scientific">Giardia intestinalis</name>
    <name type="common">Giardia lamblia</name>
    <dbReference type="NCBI Taxonomy" id="5741"/>
    <lineage>
        <taxon>Eukaryota</taxon>
        <taxon>Metamonada</taxon>
        <taxon>Diplomonadida</taxon>
        <taxon>Hexamitidae</taxon>
        <taxon>Giardiinae</taxon>
        <taxon>Giardia</taxon>
    </lineage>
</organism>